<protein>
    <recommendedName>
        <fullName evidence="10">Angiomotin-like 2b</fullName>
    </recommendedName>
</protein>
<reference evidence="9" key="1">
    <citation type="journal article" date="2013" name="Nature">
        <title>The zebrafish reference genome sequence and its relationship to the human genome.</title>
        <authorList>
            <person name="Howe K."/>
            <person name="Clark M.D."/>
            <person name="Torroja C.F."/>
            <person name="Torrance J."/>
            <person name="Berthelot C."/>
            <person name="Muffato M."/>
            <person name="Collins J.E."/>
            <person name="Humphray S."/>
            <person name="McLaren K."/>
            <person name="Matthews L."/>
            <person name="McLaren S."/>
            <person name="Sealy I."/>
            <person name="Caccamo M."/>
            <person name="Churcher C."/>
            <person name="Scott C."/>
            <person name="Barrett J.C."/>
            <person name="Koch R."/>
            <person name="Rauch G.J."/>
            <person name="White S."/>
            <person name="Chow W."/>
            <person name="Kilian B."/>
            <person name="Quintais L.T."/>
            <person name="Guerra-Assuncao J.A."/>
            <person name="Zhou Y."/>
            <person name="Gu Y."/>
            <person name="Yen J."/>
            <person name="Vogel J.H."/>
            <person name="Eyre T."/>
            <person name="Redmond S."/>
            <person name="Banerjee R."/>
            <person name="Chi J."/>
            <person name="Fu B."/>
            <person name="Langley E."/>
            <person name="Maguire S.F."/>
            <person name="Laird G.K."/>
            <person name="Lloyd D."/>
            <person name="Kenyon E."/>
            <person name="Donaldson S."/>
            <person name="Sehra H."/>
            <person name="Almeida-King J."/>
            <person name="Loveland J."/>
            <person name="Trevanion S."/>
            <person name="Jones M."/>
            <person name="Quail M."/>
            <person name="Willey D."/>
            <person name="Hunt A."/>
            <person name="Burton J."/>
            <person name="Sims S."/>
            <person name="McLay K."/>
            <person name="Plumb B."/>
            <person name="Davis J."/>
            <person name="Clee C."/>
            <person name="Oliver K."/>
            <person name="Clark R."/>
            <person name="Riddle C."/>
            <person name="Elliot D."/>
            <person name="Threadgold G."/>
            <person name="Harden G."/>
            <person name="Ware D."/>
            <person name="Begum S."/>
            <person name="Mortimore B."/>
            <person name="Kerry G."/>
            <person name="Heath P."/>
            <person name="Phillimore B."/>
            <person name="Tracey A."/>
            <person name="Corby N."/>
            <person name="Dunn M."/>
            <person name="Johnson C."/>
            <person name="Wood J."/>
            <person name="Clark S."/>
            <person name="Pelan S."/>
            <person name="Griffiths G."/>
            <person name="Smith M."/>
            <person name="Glithero R."/>
            <person name="Howden P."/>
            <person name="Barker N."/>
            <person name="Lloyd C."/>
            <person name="Stevens C."/>
            <person name="Harley J."/>
            <person name="Holt K."/>
            <person name="Panagiotidis G."/>
            <person name="Lovell J."/>
            <person name="Beasley H."/>
            <person name="Henderson C."/>
            <person name="Gordon D."/>
            <person name="Auger K."/>
            <person name="Wright D."/>
            <person name="Collins J."/>
            <person name="Raisen C."/>
            <person name="Dyer L."/>
            <person name="Leung K."/>
            <person name="Robertson L."/>
            <person name="Ambridge K."/>
            <person name="Leongamornlert D."/>
            <person name="McGuire S."/>
            <person name="Gilderthorp R."/>
            <person name="Griffiths C."/>
            <person name="Manthravadi D."/>
            <person name="Nichol S."/>
            <person name="Barker G."/>
            <person name="Whitehead S."/>
            <person name="Kay M."/>
            <person name="Brown J."/>
            <person name="Murnane C."/>
            <person name="Gray E."/>
            <person name="Humphries M."/>
            <person name="Sycamore N."/>
            <person name="Barker D."/>
            <person name="Saunders D."/>
            <person name="Wallis J."/>
            <person name="Babbage A."/>
            <person name="Hammond S."/>
            <person name="Mashreghi-Mohammadi M."/>
            <person name="Barr L."/>
            <person name="Martin S."/>
            <person name="Wray P."/>
            <person name="Ellington A."/>
            <person name="Matthews N."/>
            <person name="Ellwood M."/>
            <person name="Woodmansey R."/>
            <person name="Clark G."/>
            <person name="Cooper J."/>
            <person name="Tromans A."/>
            <person name="Grafham D."/>
            <person name="Skuce C."/>
            <person name="Pandian R."/>
            <person name="Andrews R."/>
            <person name="Harrison E."/>
            <person name="Kimberley A."/>
            <person name="Garnett J."/>
            <person name="Fosker N."/>
            <person name="Hall R."/>
            <person name="Garner P."/>
            <person name="Kelly D."/>
            <person name="Bird C."/>
            <person name="Palmer S."/>
            <person name="Gehring I."/>
            <person name="Berger A."/>
            <person name="Dooley C.M."/>
            <person name="Ersan-Urun Z."/>
            <person name="Eser C."/>
            <person name="Geiger H."/>
            <person name="Geisler M."/>
            <person name="Karotki L."/>
            <person name="Kirn A."/>
            <person name="Konantz J."/>
            <person name="Konantz M."/>
            <person name="Oberlander M."/>
            <person name="Rudolph-Geiger S."/>
            <person name="Teucke M."/>
            <person name="Lanz C."/>
            <person name="Raddatz G."/>
            <person name="Osoegawa K."/>
            <person name="Zhu B."/>
            <person name="Rapp A."/>
            <person name="Widaa S."/>
            <person name="Langford C."/>
            <person name="Yang F."/>
            <person name="Schuster S.C."/>
            <person name="Carter N.P."/>
            <person name="Harrow J."/>
            <person name="Ning Z."/>
            <person name="Herrero J."/>
            <person name="Searle S.M."/>
            <person name="Enright A."/>
            <person name="Geisler R."/>
            <person name="Plasterk R.H."/>
            <person name="Lee C."/>
            <person name="Westerfield M."/>
            <person name="de Jong P.J."/>
            <person name="Zon L.I."/>
            <person name="Postlethwait J.H."/>
            <person name="Nusslein-Volhard C."/>
            <person name="Hubbard T.J."/>
            <person name="Roest Crollius H."/>
            <person name="Rogers J."/>
            <person name="Stemple D.L."/>
        </authorList>
    </citation>
    <scope>NUCLEOTIDE SEQUENCE [LARGE SCALE GENOMIC DNA]</scope>
    <source>
        <strain evidence="9">Tuebingen</strain>
    </source>
</reference>
<reference evidence="8" key="2">
    <citation type="journal article" date="2014" name="Nat. Commun.">
        <title>AmotL2 links VE-cadherin to contractile actin fibres necessary for aortic lumen expansion.</title>
        <authorList>
            <person name="Hultin S."/>
            <person name="Zheng Y."/>
            <person name="Mojallal M."/>
            <person name="Vertuani S."/>
            <person name="Gentili C."/>
            <person name="Balland M."/>
            <person name="Milloud R."/>
            <person name="Belting H.G."/>
            <person name="Affolter M."/>
            <person name="Helker C.S."/>
            <person name="Adams R.H."/>
            <person name="Herzog W."/>
            <person name="Uhlen P."/>
            <person name="Majumdar A."/>
            <person name="Holmgren L."/>
        </authorList>
    </citation>
    <scope>FUNCTION</scope>
    <scope>TISSUE SPECIFICITY</scope>
    <scope>DISRUPTION PHENOTYPE</scope>
</reference>
<reference evidence="8" key="3">
    <citation type="journal article" date="2017" name="Sci. Rep.">
        <title>The E-cadherin/AmotL2 complex organizes actin filaments required for epithelial hexagonal packing and blastocyst hatching.</title>
        <authorList>
            <person name="Hildebrand S."/>
            <person name="Hultin S."/>
            <person name="Subramani A."/>
            <person name="Petropoulos S."/>
            <person name="Zhang Y."/>
            <person name="Cao X."/>
            <person name="Mpindi J."/>
            <person name="Kalloniemi O."/>
            <person name="Johansson S."/>
            <person name="Majumdar A."/>
            <person name="Lanner F."/>
            <person name="Holmgren L."/>
        </authorList>
    </citation>
    <scope>FUNCTION</scope>
    <scope>DISRUPTION PHENOTYPE</scope>
</reference>
<organism evidence="9">
    <name type="scientific">Danio rerio</name>
    <name type="common">Zebrafish</name>
    <name type="synonym">Brachydanio rerio</name>
    <dbReference type="NCBI Taxonomy" id="7955"/>
    <lineage>
        <taxon>Eukaryota</taxon>
        <taxon>Metazoa</taxon>
        <taxon>Chordata</taxon>
        <taxon>Craniata</taxon>
        <taxon>Vertebrata</taxon>
        <taxon>Euteleostomi</taxon>
        <taxon>Actinopterygii</taxon>
        <taxon>Neopterygii</taxon>
        <taxon>Teleostei</taxon>
        <taxon>Ostariophysi</taxon>
        <taxon>Cypriniformes</taxon>
        <taxon>Danionidae</taxon>
        <taxon>Danioninae</taxon>
        <taxon>Danio</taxon>
    </lineage>
</organism>
<proteinExistence type="evidence at transcript level"/>
<dbReference type="EMBL" id="BX649390">
    <property type="status" value="NOT_ANNOTATED_CDS"/>
    <property type="molecule type" value="Genomic_DNA"/>
</dbReference>
<dbReference type="RefSeq" id="NP_001071074.2">
    <property type="nucleotide sequence ID" value="NM_001077606.2"/>
</dbReference>
<dbReference type="RefSeq" id="XP_005171265.1">
    <property type="nucleotide sequence ID" value="XM_005171208.3"/>
</dbReference>
<dbReference type="SMR" id="B8A5S6"/>
<dbReference type="FunCoup" id="B8A5S6">
    <property type="interactions" value="227"/>
</dbReference>
<dbReference type="STRING" id="7955.ENSDARP00000114222"/>
<dbReference type="PaxDb" id="7955-ENSDARP00000114222"/>
<dbReference type="GeneID" id="559784"/>
<dbReference type="AGR" id="ZFIN:ZDB-GENE-061103-307"/>
<dbReference type="ZFIN" id="ZDB-GENE-061103-307">
    <property type="gene designation" value="amotl2b"/>
</dbReference>
<dbReference type="eggNOG" id="ENOG502QR7W">
    <property type="taxonomic scope" value="Eukaryota"/>
</dbReference>
<dbReference type="HOGENOM" id="CLU_009937_2_0_1"/>
<dbReference type="OMA" id="NSHSYPE"/>
<dbReference type="OrthoDB" id="5974715at2759"/>
<dbReference type="PhylomeDB" id="B8A5S6"/>
<dbReference type="TreeFam" id="TF333368"/>
<dbReference type="Proteomes" id="UP000000437">
    <property type="component" value="Chromosome 2"/>
</dbReference>
<dbReference type="Bgee" id="ENSDARG00000061948">
    <property type="expression patterns" value="Expressed in spleen and 23 other cell types or tissues"/>
</dbReference>
<dbReference type="GO" id="GO:0005923">
    <property type="term" value="C:bicellular tight junction"/>
    <property type="evidence" value="ECO:0000318"/>
    <property type="project" value="GO_Central"/>
</dbReference>
<dbReference type="GO" id="GO:0042995">
    <property type="term" value="C:cell projection"/>
    <property type="evidence" value="ECO:0007669"/>
    <property type="project" value="UniProtKB-KW"/>
</dbReference>
<dbReference type="GO" id="GO:0031410">
    <property type="term" value="C:cytoplasmic vesicle"/>
    <property type="evidence" value="ECO:0000318"/>
    <property type="project" value="GO_Central"/>
</dbReference>
<dbReference type="GO" id="GO:0005886">
    <property type="term" value="C:plasma membrane"/>
    <property type="evidence" value="ECO:0000318"/>
    <property type="project" value="GO_Central"/>
</dbReference>
<dbReference type="GO" id="GO:0002102">
    <property type="term" value="C:podosome"/>
    <property type="evidence" value="ECO:0007669"/>
    <property type="project" value="UniProtKB-SubCell"/>
</dbReference>
<dbReference type="GO" id="GO:0055037">
    <property type="term" value="C:recycling endosome"/>
    <property type="evidence" value="ECO:0007669"/>
    <property type="project" value="UniProtKB-SubCell"/>
</dbReference>
<dbReference type="GO" id="GO:0030036">
    <property type="term" value="P:actin cytoskeleton organization"/>
    <property type="evidence" value="ECO:0000316"/>
    <property type="project" value="ZFIN"/>
</dbReference>
<dbReference type="GO" id="GO:0001525">
    <property type="term" value="P:angiogenesis"/>
    <property type="evidence" value="ECO:0000318"/>
    <property type="project" value="GO_Central"/>
</dbReference>
<dbReference type="GO" id="GO:0035907">
    <property type="term" value="P:dorsal aorta development"/>
    <property type="evidence" value="ECO:0000316"/>
    <property type="project" value="ZFIN"/>
</dbReference>
<dbReference type="GO" id="GO:0035912">
    <property type="term" value="P:dorsal aorta morphogenesis"/>
    <property type="evidence" value="ECO:0000315"/>
    <property type="project" value="ZFIN"/>
</dbReference>
<dbReference type="GO" id="GO:0001886">
    <property type="term" value="P:endothelial cell morphogenesis"/>
    <property type="evidence" value="ECO:0000315"/>
    <property type="project" value="UniProtKB"/>
</dbReference>
<dbReference type="GO" id="GO:0003365">
    <property type="term" value="P:establishment of cell polarity involved in ameboidal cell migration"/>
    <property type="evidence" value="ECO:0000318"/>
    <property type="project" value="GO_Central"/>
</dbReference>
<dbReference type="GO" id="GO:0035329">
    <property type="term" value="P:hippo signaling"/>
    <property type="evidence" value="ECO:0000318"/>
    <property type="project" value="GO_Central"/>
</dbReference>
<dbReference type="GO" id="GO:0030334">
    <property type="term" value="P:regulation of cell migration"/>
    <property type="evidence" value="ECO:0000318"/>
    <property type="project" value="GO_Central"/>
</dbReference>
<dbReference type="GO" id="GO:0008360">
    <property type="term" value="P:regulation of cell shape"/>
    <property type="evidence" value="ECO:0000316"/>
    <property type="project" value="ZFIN"/>
</dbReference>
<dbReference type="GO" id="GO:0016055">
    <property type="term" value="P:Wnt signaling pathway"/>
    <property type="evidence" value="ECO:0007669"/>
    <property type="project" value="UniProtKB-KW"/>
</dbReference>
<dbReference type="InterPro" id="IPR009114">
    <property type="entry name" value="Angiomotin"/>
</dbReference>
<dbReference type="InterPro" id="IPR051747">
    <property type="entry name" value="Angiomotin-like"/>
</dbReference>
<dbReference type="InterPro" id="IPR024646">
    <property type="entry name" value="Angiomotin_C"/>
</dbReference>
<dbReference type="PANTHER" id="PTHR14826">
    <property type="entry name" value="ANGIOMOTIN"/>
    <property type="match status" value="1"/>
</dbReference>
<dbReference type="PANTHER" id="PTHR14826:SF3">
    <property type="entry name" value="ANGIOMOTIN-LIKE PROTEIN 2"/>
    <property type="match status" value="1"/>
</dbReference>
<dbReference type="Pfam" id="PF12240">
    <property type="entry name" value="Angiomotin_C"/>
    <property type="match status" value="1"/>
</dbReference>
<dbReference type="PRINTS" id="PR01807">
    <property type="entry name" value="ANGIOMOTIN"/>
</dbReference>
<feature type="chain" id="PRO_0000460816" description="Angiomotin-like 2b">
    <location>
        <begin position="1"/>
        <end position="681"/>
    </location>
</feature>
<feature type="region of interest" description="Disordered" evidence="5">
    <location>
        <begin position="68"/>
        <end position="106"/>
    </location>
</feature>
<feature type="region of interest" description="Disordered" evidence="5">
    <location>
        <begin position="589"/>
        <end position="618"/>
    </location>
</feature>
<feature type="coiled-coil region" evidence="4">
    <location>
        <begin position="268"/>
        <end position="319"/>
    </location>
</feature>
<feature type="coiled-coil region" evidence="4">
    <location>
        <begin position="362"/>
        <end position="441"/>
    </location>
</feature>
<feature type="coiled-coil region" evidence="4">
    <location>
        <begin position="481"/>
        <end position="508"/>
    </location>
</feature>
<feature type="short sequence motif" description="PDZ-binding" evidence="3">
    <location>
        <begin position="678"/>
        <end position="681"/>
    </location>
</feature>
<feature type="compositionally biased region" description="Low complexity" evidence="5">
    <location>
        <begin position="68"/>
        <end position="84"/>
    </location>
</feature>
<feature type="compositionally biased region" description="Polar residues" evidence="5">
    <location>
        <begin position="90"/>
        <end position="102"/>
    </location>
</feature>
<feature type="compositionally biased region" description="Polar residues" evidence="5">
    <location>
        <begin position="597"/>
        <end position="611"/>
    </location>
</feature>
<feature type="modified residue" description="Phosphotyrosine; by FGFR1" evidence="1">
    <location>
        <position position="126"/>
    </location>
</feature>
<gene>
    <name evidence="10" type="primary">amotl2b</name>
</gene>
<evidence type="ECO:0000250" key="1">
    <source>
        <dbReference type="UniProtKB" id="A1YB07"/>
    </source>
</evidence>
<evidence type="ECO:0000250" key="2">
    <source>
        <dbReference type="UniProtKB" id="Q8K371"/>
    </source>
</evidence>
<evidence type="ECO:0000250" key="3">
    <source>
        <dbReference type="UniProtKB" id="Q9Y2J4"/>
    </source>
</evidence>
<evidence type="ECO:0000255" key="4"/>
<evidence type="ECO:0000256" key="5">
    <source>
        <dbReference type="SAM" id="MobiDB-lite"/>
    </source>
</evidence>
<evidence type="ECO:0000269" key="6">
    <source>
    </source>
</evidence>
<evidence type="ECO:0000269" key="7">
    <source>
    </source>
</evidence>
<evidence type="ECO:0000305" key="8"/>
<evidence type="ECO:0000312" key="9">
    <source>
        <dbReference type="Proteomes" id="UP000000437"/>
    </source>
</evidence>
<evidence type="ECO:0000312" key="10">
    <source>
        <dbReference type="ZFIN" id="ZDB-GENE-061103-307"/>
    </source>
</evidence>
<comment type="function">
    <text evidence="1 6 7">Required for proper architecture of actin filaments and for cell movements during embryogenesis (By similarity). Plays a role in the radial actin fiber architecture in skin epithelial cells, thereby maintains cell geometry, size and cell interconnectivity within the skin (PubMed:28842668). Plays an important role in coupling actin fibers to cell junctions in endothelial cells and is therefore required for correct endothelial cell morphology and maintenance of dorsal aorta lumen expansion during embryogenesis (PubMed:24806444). May further play a role in the polarity, proliferation and migration of endothelial cells, and therefore participates in angiogenesis (By similarity). May regulate the translocation of phosphorylated SRC to peripheral cell-matrix adhesion sites (By similarity).</text>
</comment>
<comment type="subunit">
    <text evidence="1">Interacts with SRC.</text>
</comment>
<comment type="subcellular location">
    <subcellularLocation>
        <location evidence="1">Recycling endosome</location>
    </subcellularLocation>
    <subcellularLocation>
        <location evidence="3">Cytoplasm</location>
    </subcellularLocation>
    <subcellularLocation>
        <location evidence="2">Cell projection</location>
        <location evidence="2">Podosome</location>
    </subcellularLocation>
    <subcellularLocation>
        <location evidence="2">Cell junction</location>
    </subcellularLocation>
</comment>
<comment type="tissue specificity">
    <text evidence="6">Expressed in endothelial cells.</text>
</comment>
<comment type="PTM">
    <text evidence="1">Phosphorylation at Tyr-126 is necessary for efficient binding to SRC and synergistically functioning with SRC to activate the downstream MAPK pathway.</text>
</comment>
<comment type="disruption phenotype">
    <text evidence="6 7">Morpholino knockdowns show pericardial edema with accumulation of erythrocytes at 28 hpf with no circulating cells present in the trunk vasculature at 48 hpf (PubMed:24806444). Constrictions and lumen narrowing in the dorsal aorta, these defects are not seen in the posterior cardinal vein at 48 hpf (PubMed:24806444). Morpholino amotl2a and amotl2b double knockdowns show significant defects in endothelial cell anteroposterior elongation at 30 hpf (PubMed:24806444). Disrupted organization of radial actin fibers that connect perpendicularly to endothelial junctions at 48 hpf (PubMed:24806444). Pericardial edema is evident at 48 hpf (PubMed:28842668). actb is present at cell junctions but the structure of non-junctional actin fibers is abnormal (PubMed:28842668). Loss of cdh1 localization to cell-cell junctions results in a diffuse localization to the cytoplasm (PubMed:28842668). Doubling of cellular surface area and decrease in skin epithelial cell hexagonal shape accompanied by a decrease in the number of connections with neighboring cells (PubMed:28842668).</text>
</comment>
<comment type="similarity">
    <text evidence="8">Belongs to the angiomotin family.</text>
</comment>
<sequence length="681" mass="77711">MPLTESAWNESVGWFSSDHKYSTSSNKMRGEEASGTVLHRLIQEQLRYGNPTDAHTLLAIQQQALRRGGGAASSSQSSSESLSQDEPHSPQLSTRQEPQGQEHQVDYQHSENYTTYPHHQEELPTYEQAKAHSQYLASQWCLPHRVCSLQDSVAIQKPCEEQDSWDMKQGHVRSISDRLLHFSMESGKMPCSASYPQINGYHANQHLQYNQQGLEYNKLAPYTEYPFSVEYENGYKAPPPFHSQHNRLPTPEVCHRLSTSPPAGREVNACSRSQLEMLMNENKRLRQELEGQTEKALKIQKLEQEIQRISEAYDTLMKGCAKREALEQALRNKLMAEIKRLQHSSVQAAKQAEAADQNQHAIEKLHLQNEEQKLRCACLEQEVQHLRNEAEKHQRRSEALESTLRSTQTRSQQLWTELQRKRAYVEKVERLQGALTQLQATCEKREGLEMRLRTRLEQELRSLRNQQRQPQPVGGTSHVSVYTLQENLREKEERILSLEADKIRWEQKYLEEKTMREFAMDAAATAAAQRDTTIINHSPCHSFIEELPSTEYRNQEVENRIRSLYAQILEKDTVISILKQKLQHEQKGQLGALQPATADSSIISSHSTPAHTAQGKERSHFNDQAAGTLHSSHAPVEALAHTTDQTPHTEAKPKNIQKAPSAVDLFKGVDDVSAEAVEIFI</sequence>
<name>AML2B_DANRE</name>
<keyword id="KW-0965">Cell junction</keyword>
<keyword id="KW-0966">Cell projection</keyword>
<keyword id="KW-0175">Coiled coil</keyword>
<keyword id="KW-0963">Cytoplasm</keyword>
<keyword id="KW-0967">Endosome</keyword>
<keyword id="KW-0597">Phosphoprotein</keyword>
<keyword id="KW-1185">Reference proteome</keyword>
<keyword id="KW-0879">Wnt signaling pathway</keyword>
<accession>B8A5S6</accession>
<accession>A0A8M2BIH6</accession>